<feature type="chain" id="PRO_0000098573" description="Isoleucine--tRNA ligase">
    <location>
        <begin position="1"/>
        <end position="1134"/>
    </location>
</feature>
<feature type="short sequence motif" description="'HIGH' region">
    <location>
        <begin position="52"/>
        <end position="62"/>
    </location>
</feature>
<feature type="short sequence motif" description="'KMSKS' region">
    <location>
        <begin position="656"/>
        <end position="660"/>
    </location>
</feature>
<feature type="binding site" evidence="1">
    <location>
        <position position="659"/>
    </location>
    <ligand>
        <name>ATP</name>
        <dbReference type="ChEBI" id="CHEBI:30616"/>
    </ligand>
</feature>
<dbReference type="EC" id="6.1.1.5" evidence="1"/>
<dbReference type="EMBL" id="AE017321">
    <property type="protein sequence ID" value="AAW70951.1"/>
    <property type="molecule type" value="Genomic_DNA"/>
</dbReference>
<dbReference type="RefSeq" id="WP_011256561.1">
    <property type="nucleotide sequence ID" value="NC_006833.1"/>
</dbReference>
<dbReference type="SMR" id="Q5GSS3"/>
<dbReference type="STRING" id="292805.Wbm0363"/>
<dbReference type="KEGG" id="wbm:Wbm0363"/>
<dbReference type="eggNOG" id="COG0060">
    <property type="taxonomic scope" value="Bacteria"/>
</dbReference>
<dbReference type="HOGENOM" id="CLU_001493_1_1_5"/>
<dbReference type="Proteomes" id="UP000000534">
    <property type="component" value="Chromosome"/>
</dbReference>
<dbReference type="GO" id="GO:0005737">
    <property type="term" value="C:cytoplasm"/>
    <property type="evidence" value="ECO:0007669"/>
    <property type="project" value="UniProtKB-SubCell"/>
</dbReference>
<dbReference type="GO" id="GO:0002161">
    <property type="term" value="F:aminoacyl-tRNA deacylase activity"/>
    <property type="evidence" value="ECO:0007669"/>
    <property type="project" value="InterPro"/>
</dbReference>
<dbReference type="GO" id="GO:0005524">
    <property type="term" value="F:ATP binding"/>
    <property type="evidence" value="ECO:0007669"/>
    <property type="project" value="UniProtKB-UniRule"/>
</dbReference>
<dbReference type="GO" id="GO:0004822">
    <property type="term" value="F:isoleucine-tRNA ligase activity"/>
    <property type="evidence" value="ECO:0007669"/>
    <property type="project" value="UniProtKB-UniRule"/>
</dbReference>
<dbReference type="GO" id="GO:0000049">
    <property type="term" value="F:tRNA binding"/>
    <property type="evidence" value="ECO:0007669"/>
    <property type="project" value="InterPro"/>
</dbReference>
<dbReference type="GO" id="GO:0008270">
    <property type="term" value="F:zinc ion binding"/>
    <property type="evidence" value="ECO:0007669"/>
    <property type="project" value="UniProtKB-UniRule"/>
</dbReference>
<dbReference type="GO" id="GO:0006428">
    <property type="term" value="P:isoleucyl-tRNA aminoacylation"/>
    <property type="evidence" value="ECO:0007669"/>
    <property type="project" value="UniProtKB-UniRule"/>
</dbReference>
<dbReference type="CDD" id="cd07961">
    <property type="entry name" value="Anticodon_Ia_Ile_ABEc"/>
    <property type="match status" value="1"/>
</dbReference>
<dbReference type="CDD" id="cd00818">
    <property type="entry name" value="IleRS_core"/>
    <property type="match status" value="1"/>
</dbReference>
<dbReference type="FunFam" id="3.40.50.620:FF:000075">
    <property type="entry name" value="Isoleucine--tRNA ligase"/>
    <property type="match status" value="1"/>
</dbReference>
<dbReference type="FunFam" id="3.40.50.620:FF:000241">
    <property type="entry name" value="Isoleucine--tRNA ligase"/>
    <property type="match status" value="1"/>
</dbReference>
<dbReference type="Gene3D" id="3.40.50.620">
    <property type="entry name" value="HUPs"/>
    <property type="match status" value="2"/>
</dbReference>
<dbReference type="Gene3D" id="1.10.730.10">
    <property type="entry name" value="Isoleucyl-tRNA Synthetase, Domain 1"/>
    <property type="match status" value="1"/>
</dbReference>
<dbReference type="HAMAP" id="MF_02003">
    <property type="entry name" value="Ile_tRNA_synth_type2"/>
    <property type="match status" value="1"/>
</dbReference>
<dbReference type="InterPro" id="IPR001412">
    <property type="entry name" value="aa-tRNA-synth_I_CS"/>
</dbReference>
<dbReference type="InterPro" id="IPR002300">
    <property type="entry name" value="aa-tRNA-synth_Ia"/>
</dbReference>
<dbReference type="InterPro" id="IPR033709">
    <property type="entry name" value="Anticodon_Ile_ABEc"/>
</dbReference>
<dbReference type="InterPro" id="IPR002301">
    <property type="entry name" value="Ile-tRNA-ligase"/>
</dbReference>
<dbReference type="InterPro" id="IPR023586">
    <property type="entry name" value="Ile-tRNA-ligase_type2"/>
</dbReference>
<dbReference type="InterPro" id="IPR013155">
    <property type="entry name" value="M/V/L/I-tRNA-synth_anticd-bd"/>
</dbReference>
<dbReference type="InterPro" id="IPR014729">
    <property type="entry name" value="Rossmann-like_a/b/a_fold"/>
</dbReference>
<dbReference type="InterPro" id="IPR009080">
    <property type="entry name" value="tRNAsynth_Ia_anticodon-bd"/>
</dbReference>
<dbReference type="InterPro" id="IPR009008">
    <property type="entry name" value="Val/Leu/Ile-tRNA-synth_edit"/>
</dbReference>
<dbReference type="PANTHER" id="PTHR42780:SF1">
    <property type="entry name" value="ISOLEUCINE--TRNA LIGASE, CYTOPLASMIC"/>
    <property type="match status" value="1"/>
</dbReference>
<dbReference type="PANTHER" id="PTHR42780">
    <property type="entry name" value="SOLEUCYL-TRNA SYNTHETASE"/>
    <property type="match status" value="1"/>
</dbReference>
<dbReference type="Pfam" id="PF08264">
    <property type="entry name" value="Anticodon_1"/>
    <property type="match status" value="1"/>
</dbReference>
<dbReference type="Pfam" id="PF19302">
    <property type="entry name" value="DUF5915"/>
    <property type="match status" value="1"/>
</dbReference>
<dbReference type="Pfam" id="PF00133">
    <property type="entry name" value="tRNA-synt_1"/>
    <property type="match status" value="1"/>
</dbReference>
<dbReference type="PRINTS" id="PR00984">
    <property type="entry name" value="TRNASYNTHILE"/>
</dbReference>
<dbReference type="SUPFAM" id="SSF47323">
    <property type="entry name" value="Anticodon-binding domain of a subclass of class I aminoacyl-tRNA synthetases"/>
    <property type="match status" value="2"/>
</dbReference>
<dbReference type="SUPFAM" id="SSF52374">
    <property type="entry name" value="Nucleotidylyl transferase"/>
    <property type="match status" value="1"/>
</dbReference>
<dbReference type="SUPFAM" id="SSF50677">
    <property type="entry name" value="ValRS/IleRS/LeuRS editing domain"/>
    <property type="match status" value="1"/>
</dbReference>
<dbReference type="PROSITE" id="PS00178">
    <property type="entry name" value="AA_TRNA_LIGASE_I"/>
    <property type="match status" value="1"/>
</dbReference>
<organism>
    <name type="scientific">Wolbachia sp. subsp. Brugia malayi (strain TRS)</name>
    <dbReference type="NCBI Taxonomy" id="292805"/>
    <lineage>
        <taxon>Bacteria</taxon>
        <taxon>Pseudomonadati</taxon>
        <taxon>Pseudomonadota</taxon>
        <taxon>Alphaproteobacteria</taxon>
        <taxon>Rickettsiales</taxon>
        <taxon>Anaplasmataceae</taxon>
        <taxon>Wolbachieae</taxon>
        <taxon>Wolbachia</taxon>
    </lineage>
</organism>
<sequence length="1134" mass="131811">MKPKHYPDTISSPDFSSLEKEIIKFWQENKIFEQSVEKRSKDNCFVFYDGPPFANGLPHYGHLLTGFIKDAFARYQTMLQKKVERRFGWDCHGLPAEMGAEKELGISGRTEIEKFGIEKFNNYCRTSVMKFSSEWEKYVNRQARWVDFHNDYKTMDRSFMESVIWAFKQLYDKGLVYESVRVVPYSWACETPLSNFETRLDTAYRKKTSKAVTVAFELLENPQQFKQKCKLLAWTTTPWTLPSNLALAIGKDIEYCAVSVHSSVSFQHVTLESREKETWIPLSRTGMTEEGTETVTEDNEVSLVNNEIYIFAEDYLEKFIGHCEQNNIPYENCNTKLKADDLAGLSYKPLFNYFKGTKNAFRVFIADYVTGEDGTGVVHTAPGFGEEDFYLCQSHDIPAICPIDNSGRFTAEVSDLTGIHVFDTNDAIIKKLKEQGNWFKTEQYIHNYPHCWRTDTPLIYRAMPSWYVAVTKFKERMIELNKRVNWIPTHIRDGQFGKWLERAHDWSISRNRFWGTPIPIWKSDNARYPRVDVYGSIAELERDFNVKVNDLHRPFIDSLTRPNPDDPTGKSIMRRVPDVFDCWFESGSVPFAQVHYPFENKEWFESNFPADFITEYIAQTRGWFYTLFVLSTALFDSEPFKNCICHGVVLDVKGQKLSKRLNNYADPMEVFDKYGSDALRFLMLSGSIVCGGNLFLNKEGSSIRDVLKNVMKPIWNSYHFFTMYANADGIKAEVCKDYKSTIDSYMIFKCFEAVESIQASMSNYNSQEACKILIDFFEVLNNWYIRRSRERFWKSNLDQDKTDAYNVLYTVFYYILRAAVPLLPLITETIWQGLKYKEISVHLADFPQLERYDSELIAKMDLVREICNSALSIRNTFNIRVRQPLGSMTVYHQSSCSFLESKPLSVVIPKFSPVIPMRDTGTQKEKKWSNAEMKTSMNEYQEMIKDEVNVKELKLVNSLEGIASLELKLNFPMLGKRIPDKVKKLVQYVKEGKWKQVDNEQVFLGNESESYIIEKDEYELLLKTNSEYSSVFGDNKGIVILNTALDDALVLEGLARDVVRLIQEARKQADFHISDRIRVIIKTEDEKIKRAINTWGEYIREQTLSLSLEINIEIGDNFYSKEYQDLIVGIELNC</sequence>
<evidence type="ECO:0000255" key="1">
    <source>
        <dbReference type="HAMAP-Rule" id="MF_02003"/>
    </source>
</evidence>
<proteinExistence type="inferred from homology"/>
<gene>
    <name evidence="1" type="primary">ileS</name>
    <name type="ordered locus">Wbm0363</name>
</gene>
<name>SYI_WOLTR</name>
<comment type="function">
    <text evidence="1">Catalyzes the attachment of isoleucine to tRNA(Ile). As IleRS can inadvertently accommodate and process structurally similar amino acids such as valine, to avoid such errors it has two additional distinct tRNA(Ile)-dependent editing activities. One activity is designated as 'pretransfer' editing and involves the hydrolysis of activated Val-AMP. The other activity is designated 'posttransfer' editing and involves deacylation of mischarged Val-tRNA(Ile).</text>
</comment>
<comment type="catalytic activity">
    <reaction evidence="1">
        <text>tRNA(Ile) + L-isoleucine + ATP = L-isoleucyl-tRNA(Ile) + AMP + diphosphate</text>
        <dbReference type="Rhea" id="RHEA:11060"/>
        <dbReference type="Rhea" id="RHEA-COMP:9666"/>
        <dbReference type="Rhea" id="RHEA-COMP:9695"/>
        <dbReference type="ChEBI" id="CHEBI:30616"/>
        <dbReference type="ChEBI" id="CHEBI:33019"/>
        <dbReference type="ChEBI" id="CHEBI:58045"/>
        <dbReference type="ChEBI" id="CHEBI:78442"/>
        <dbReference type="ChEBI" id="CHEBI:78528"/>
        <dbReference type="ChEBI" id="CHEBI:456215"/>
        <dbReference type="EC" id="6.1.1.5"/>
    </reaction>
</comment>
<comment type="cofactor">
    <cofactor evidence="1">
        <name>Zn(2+)</name>
        <dbReference type="ChEBI" id="CHEBI:29105"/>
    </cofactor>
</comment>
<comment type="subunit">
    <text evidence="1">Monomer.</text>
</comment>
<comment type="subcellular location">
    <subcellularLocation>
        <location evidence="1">Cytoplasm</location>
    </subcellularLocation>
</comment>
<comment type="domain">
    <text evidence="1">IleRS has two distinct active sites: one for aminoacylation and one for editing. The misactivated valine is translocated from the active site to the editing site, which sterically excludes the correctly activated isoleucine. The single editing site contains two valyl binding pockets, one specific for each substrate (Val-AMP or Val-tRNA(Ile)).</text>
</comment>
<comment type="similarity">
    <text evidence="1">Belongs to the class-I aminoacyl-tRNA synthetase family. IleS type 2 subfamily.</text>
</comment>
<protein>
    <recommendedName>
        <fullName evidence="1">Isoleucine--tRNA ligase</fullName>
        <ecNumber evidence="1">6.1.1.5</ecNumber>
    </recommendedName>
    <alternativeName>
        <fullName evidence="1">Isoleucyl-tRNA synthetase</fullName>
        <shortName evidence="1">IleRS</shortName>
    </alternativeName>
</protein>
<reference key="1">
    <citation type="journal article" date="2005" name="PLoS Biol.">
        <title>The Wolbachia genome of Brugia malayi: endosymbiont evolution within a human pathogenic nematode.</title>
        <authorList>
            <person name="Foster J."/>
            <person name="Ganatra M."/>
            <person name="Kamal I."/>
            <person name="Ware J."/>
            <person name="Makarova K."/>
            <person name="Ivanova N."/>
            <person name="Bhattacharyya A."/>
            <person name="Kapatral V."/>
            <person name="Kumar S."/>
            <person name="Posfai J."/>
            <person name="Vincze T."/>
            <person name="Ingram J."/>
            <person name="Moran L."/>
            <person name="Lapidus A."/>
            <person name="Omelchenko M."/>
            <person name="Kyrpides N."/>
            <person name="Ghedin E."/>
            <person name="Wang S."/>
            <person name="Goltsman E."/>
            <person name="Joukov V."/>
            <person name="Ostrovskaya O."/>
            <person name="Tsukerman K."/>
            <person name="Mazur M."/>
            <person name="Comb D."/>
            <person name="Koonin E."/>
            <person name="Slatko B."/>
        </authorList>
    </citation>
    <scope>NUCLEOTIDE SEQUENCE [LARGE SCALE GENOMIC DNA]</scope>
    <source>
        <strain>TRS</strain>
    </source>
</reference>
<keyword id="KW-0030">Aminoacyl-tRNA synthetase</keyword>
<keyword id="KW-0067">ATP-binding</keyword>
<keyword id="KW-0963">Cytoplasm</keyword>
<keyword id="KW-0436">Ligase</keyword>
<keyword id="KW-0479">Metal-binding</keyword>
<keyword id="KW-0547">Nucleotide-binding</keyword>
<keyword id="KW-0648">Protein biosynthesis</keyword>
<keyword id="KW-1185">Reference proteome</keyword>
<keyword id="KW-0862">Zinc</keyword>
<accession>Q5GSS3</accession>